<protein>
    <recommendedName>
        <fullName evidence="1">Aliphatic sulfonates import ATP-binding protein SsuB 1</fullName>
        <ecNumber evidence="1">7.6.2.14</ecNumber>
    </recommendedName>
</protein>
<accession>Q82MV1</accession>
<keyword id="KW-0067">ATP-binding</keyword>
<keyword id="KW-1003">Cell membrane</keyword>
<keyword id="KW-0472">Membrane</keyword>
<keyword id="KW-0547">Nucleotide-binding</keyword>
<keyword id="KW-1185">Reference proteome</keyword>
<keyword id="KW-1278">Translocase</keyword>
<keyword id="KW-0813">Transport</keyword>
<evidence type="ECO:0000255" key="1">
    <source>
        <dbReference type="HAMAP-Rule" id="MF_01724"/>
    </source>
</evidence>
<sequence>MATDVHRPLSTQKAATAAAQASTAAASAVRVDGLTRSFDGRAVIDNLELDVRPGEFVALLGRSGCGKSTLLRILAGLDRDIEGTVLVPRRKAVAFQAPRLMPWKKVWRNVLLGLPGKPERAVAEQALTEVGLAHRSHAWPKTLSGGEAQRASLARALVREPDLLLLDEPFGALDALTRIKAQRLVGELWQRRGCAVLLVTHDVEEAVLLADRVLVMDDGVIAYETEVELDRPRDITDPRFAELRAELLERLGVDTAAEAA</sequence>
<comment type="function">
    <text evidence="1">Part of the ABC transporter complex SsuABC involved in aliphatic sulfonates import. Responsible for energy coupling to the transport system.</text>
</comment>
<comment type="catalytic activity">
    <reaction evidence="1">
        <text>ATP + H2O + aliphatic sulfonate-[sulfonate-binding protein]Side 1 = ADP + phosphate + aliphatic sulfonateSide 2 + [sulfonate-binding protein]Side 1.</text>
        <dbReference type="EC" id="7.6.2.14"/>
    </reaction>
</comment>
<comment type="subunit">
    <text evidence="1">The complex is composed of two ATP-binding proteins (SsuB), two transmembrane proteins (SsuC) and a solute-binding protein (SsuA).</text>
</comment>
<comment type="subcellular location">
    <subcellularLocation>
        <location evidence="1">Cell membrane</location>
        <topology evidence="1">Peripheral membrane protein</topology>
    </subcellularLocation>
</comment>
<comment type="similarity">
    <text evidence="1">Belongs to the ABC transporter superfamily. Aliphatic sulfonates importer (TC 3.A.1.17.2) family.</text>
</comment>
<organism>
    <name type="scientific">Streptomyces avermitilis (strain ATCC 31267 / DSM 46492 / JCM 5070 / NBRC 14893 / NCIMB 12804 / NRRL 8165 / MA-4680)</name>
    <dbReference type="NCBI Taxonomy" id="227882"/>
    <lineage>
        <taxon>Bacteria</taxon>
        <taxon>Bacillati</taxon>
        <taxon>Actinomycetota</taxon>
        <taxon>Actinomycetes</taxon>
        <taxon>Kitasatosporales</taxon>
        <taxon>Streptomycetaceae</taxon>
        <taxon>Streptomyces</taxon>
    </lineage>
</organism>
<feature type="chain" id="PRO_0000279963" description="Aliphatic sulfonates import ATP-binding protein SsuB 1">
    <location>
        <begin position="1"/>
        <end position="260"/>
    </location>
</feature>
<feature type="domain" description="ABC transporter" evidence="1">
    <location>
        <begin position="29"/>
        <end position="243"/>
    </location>
</feature>
<feature type="binding site" evidence="1">
    <location>
        <begin position="61"/>
        <end position="68"/>
    </location>
    <ligand>
        <name>ATP</name>
        <dbReference type="ChEBI" id="CHEBI:30616"/>
    </ligand>
</feature>
<proteinExistence type="inferred from homology"/>
<gene>
    <name evidence="1" type="primary">ssuB1</name>
    <name type="ordered locus">SAV_1559</name>
</gene>
<name>SSUB1_STRAW</name>
<reference key="1">
    <citation type="journal article" date="2001" name="Proc. Natl. Acad. Sci. U.S.A.">
        <title>Genome sequence of an industrial microorganism Streptomyces avermitilis: deducing the ability of producing secondary metabolites.</title>
        <authorList>
            <person name="Omura S."/>
            <person name="Ikeda H."/>
            <person name="Ishikawa J."/>
            <person name="Hanamoto A."/>
            <person name="Takahashi C."/>
            <person name="Shinose M."/>
            <person name="Takahashi Y."/>
            <person name="Horikawa H."/>
            <person name="Nakazawa H."/>
            <person name="Osonoe T."/>
            <person name="Kikuchi H."/>
            <person name="Shiba T."/>
            <person name="Sakaki Y."/>
            <person name="Hattori M."/>
        </authorList>
    </citation>
    <scope>NUCLEOTIDE SEQUENCE [LARGE SCALE GENOMIC DNA]</scope>
    <source>
        <strain>ATCC 31267 / DSM 46492 / JCM 5070 / NBRC 14893 / NCIMB 12804 / NRRL 8165 / MA-4680</strain>
    </source>
</reference>
<reference key="2">
    <citation type="journal article" date="2003" name="Nat. Biotechnol.">
        <title>Complete genome sequence and comparative analysis of the industrial microorganism Streptomyces avermitilis.</title>
        <authorList>
            <person name="Ikeda H."/>
            <person name="Ishikawa J."/>
            <person name="Hanamoto A."/>
            <person name="Shinose M."/>
            <person name="Kikuchi H."/>
            <person name="Shiba T."/>
            <person name="Sakaki Y."/>
            <person name="Hattori M."/>
            <person name="Omura S."/>
        </authorList>
    </citation>
    <scope>NUCLEOTIDE SEQUENCE [LARGE SCALE GENOMIC DNA]</scope>
    <source>
        <strain>ATCC 31267 / DSM 46492 / JCM 5070 / NBRC 14893 / NCIMB 12804 / NRRL 8165 / MA-4680</strain>
    </source>
</reference>
<dbReference type="EC" id="7.6.2.14" evidence="1"/>
<dbReference type="EMBL" id="BA000030">
    <property type="protein sequence ID" value="BAC69270.1"/>
    <property type="molecule type" value="Genomic_DNA"/>
</dbReference>
<dbReference type="RefSeq" id="WP_010982998.1">
    <property type="nucleotide sequence ID" value="NZ_JZJK01000086.1"/>
</dbReference>
<dbReference type="SMR" id="Q82MV1"/>
<dbReference type="GeneID" id="41538656"/>
<dbReference type="KEGG" id="sma:SAVERM_1559"/>
<dbReference type="eggNOG" id="COG1116">
    <property type="taxonomic scope" value="Bacteria"/>
</dbReference>
<dbReference type="HOGENOM" id="CLU_000604_1_22_11"/>
<dbReference type="OrthoDB" id="4310860at2"/>
<dbReference type="Proteomes" id="UP000000428">
    <property type="component" value="Chromosome"/>
</dbReference>
<dbReference type="GO" id="GO:0005886">
    <property type="term" value="C:plasma membrane"/>
    <property type="evidence" value="ECO:0007669"/>
    <property type="project" value="UniProtKB-SubCell"/>
</dbReference>
<dbReference type="GO" id="GO:0005524">
    <property type="term" value="F:ATP binding"/>
    <property type="evidence" value="ECO:0007669"/>
    <property type="project" value="UniProtKB-KW"/>
</dbReference>
<dbReference type="GO" id="GO:0016887">
    <property type="term" value="F:ATP hydrolysis activity"/>
    <property type="evidence" value="ECO:0007669"/>
    <property type="project" value="InterPro"/>
</dbReference>
<dbReference type="Gene3D" id="3.40.50.300">
    <property type="entry name" value="P-loop containing nucleotide triphosphate hydrolases"/>
    <property type="match status" value="1"/>
</dbReference>
<dbReference type="InterPro" id="IPR003593">
    <property type="entry name" value="AAA+_ATPase"/>
</dbReference>
<dbReference type="InterPro" id="IPR003439">
    <property type="entry name" value="ABC_transporter-like_ATP-bd"/>
</dbReference>
<dbReference type="InterPro" id="IPR017871">
    <property type="entry name" value="ABC_transporter-like_CS"/>
</dbReference>
<dbReference type="InterPro" id="IPR050166">
    <property type="entry name" value="ABC_transporter_ATP-bind"/>
</dbReference>
<dbReference type="InterPro" id="IPR027417">
    <property type="entry name" value="P-loop_NTPase"/>
</dbReference>
<dbReference type="PANTHER" id="PTHR42788:SF17">
    <property type="entry name" value="ALIPHATIC SULFONATES IMPORT ATP-BINDING PROTEIN SSUB"/>
    <property type="match status" value="1"/>
</dbReference>
<dbReference type="PANTHER" id="PTHR42788">
    <property type="entry name" value="TAURINE IMPORT ATP-BINDING PROTEIN-RELATED"/>
    <property type="match status" value="1"/>
</dbReference>
<dbReference type="Pfam" id="PF00005">
    <property type="entry name" value="ABC_tran"/>
    <property type="match status" value="1"/>
</dbReference>
<dbReference type="SMART" id="SM00382">
    <property type="entry name" value="AAA"/>
    <property type="match status" value="1"/>
</dbReference>
<dbReference type="SUPFAM" id="SSF52540">
    <property type="entry name" value="P-loop containing nucleoside triphosphate hydrolases"/>
    <property type="match status" value="1"/>
</dbReference>
<dbReference type="PROSITE" id="PS00211">
    <property type="entry name" value="ABC_TRANSPORTER_1"/>
    <property type="match status" value="1"/>
</dbReference>
<dbReference type="PROSITE" id="PS50893">
    <property type="entry name" value="ABC_TRANSPORTER_2"/>
    <property type="match status" value="1"/>
</dbReference>
<dbReference type="PROSITE" id="PS51291">
    <property type="entry name" value="SSUB"/>
    <property type="match status" value="1"/>
</dbReference>